<reference key="1">
    <citation type="journal article" date="2001" name="Nature">
        <title>Genome sequence of Yersinia pestis, the causative agent of plague.</title>
        <authorList>
            <person name="Parkhill J."/>
            <person name="Wren B.W."/>
            <person name="Thomson N.R."/>
            <person name="Titball R.W."/>
            <person name="Holden M.T.G."/>
            <person name="Prentice M.B."/>
            <person name="Sebaihia M."/>
            <person name="James K.D."/>
            <person name="Churcher C.M."/>
            <person name="Mungall K.L."/>
            <person name="Baker S."/>
            <person name="Basham D."/>
            <person name="Bentley S.D."/>
            <person name="Brooks K."/>
            <person name="Cerdeno-Tarraga A.-M."/>
            <person name="Chillingworth T."/>
            <person name="Cronin A."/>
            <person name="Davies R.M."/>
            <person name="Davis P."/>
            <person name="Dougan G."/>
            <person name="Feltwell T."/>
            <person name="Hamlin N."/>
            <person name="Holroyd S."/>
            <person name="Jagels K."/>
            <person name="Karlyshev A.V."/>
            <person name="Leather S."/>
            <person name="Moule S."/>
            <person name="Oyston P.C.F."/>
            <person name="Quail M.A."/>
            <person name="Rutherford K.M."/>
            <person name="Simmonds M."/>
            <person name="Skelton J."/>
            <person name="Stevens K."/>
            <person name="Whitehead S."/>
            <person name="Barrell B.G."/>
        </authorList>
    </citation>
    <scope>NUCLEOTIDE SEQUENCE [LARGE SCALE GENOMIC DNA]</scope>
    <source>
        <strain>CO-92 / Biovar Orientalis</strain>
    </source>
</reference>
<reference key="2">
    <citation type="journal article" date="2002" name="J. Bacteriol.">
        <title>Genome sequence of Yersinia pestis KIM.</title>
        <authorList>
            <person name="Deng W."/>
            <person name="Burland V."/>
            <person name="Plunkett G. III"/>
            <person name="Boutin A."/>
            <person name="Mayhew G.F."/>
            <person name="Liss P."/>
            <person name="Perna N.T."/>
            <person name="Rose D.J."/>
            <person name="Mau B."/>
            <person name="Zhou S."/>
            <person name="Schwartz D.C."/>
            <person name="Fetherston J.D."/>
            <person name="Lindler L.E."/>
            <person name="Brubaker R.R."/>
            <person name="Plano G.V."/>
            <person name="Straley S.C."/>
            <person name="McDonough K.A."/>
            <person name="Nilles M.L."/>
            <person name="Matson J.S."/>
            <person name="Blattner F.R."/>
            <person name="Perry R.D."/>
        </authorList>
    </citation>
    <scope>NUCLEOTIDE SEQUENCE [LARGE SCALE GENOMIC DNA]</scope>
    <source>
        <strain>KIM10+ / Biovar Mediaevalis</strain>
    </source>
</reference>
<reference key="3">
    <citation type="journal article" date="2004" name="DNA Res.">
        <title>Complete genome sequence of Yersinia pestis strain 91001, an isolate avirulent to humans.</title>
        <authorList>
            <person name="Song Y."/>
            <person name="Tong Z."/>
            <person name="Wang J."/>
            <person name="Wang L."/>
            <person name="Guo Z."/>
            <person name="Han Y."/>
            <person name="Zhang J."/>
            <person name="Pei D."/>
            <person name="Zhou D."/>
            <person name="Qin H."/>
            <person name="Pang X."/>
            <person name="Han Y."/>
            <person name="Zhai J."/>
            <person name="Li M."/>
            <person name="Cui B."/>
            <person name="Qi Z."/>
            <person name="Jin L."/>
            <person name="Dai R."/>
            <person name="Chen F."/>
            <person name="Li S."/>
            <person name="Ye C."/>
            <person name="Du Z."/>
            <person name="Lin W."/>
            <person name="Wang J."/>
            <person name="Yu J."/>
            <person name="Yang H."/>
            <person name="Wang J."/>
            <person name="Huang P."/>
            <person name="Yang R."/>
        </authorList>
    </citation>
    <scope>NUCLEOTIDE SEQUENCE [LARGE SCALE GENOMIC DNA]</scope>
    <source>
        <strain>91001 / Biovar Mediaevalis</strain>
    </source>
</reference>
<accession>Q8Z9T1</accession>
<accession>Q0W9S3</accession>
<accession>Q8CZF7</accession>
<organism>
    <name type="scientific">Yersinia pestis</name>
    <dbReference type="NCBI Taxonomy" id="632"/>
    <lineage>
        <taxon>Bacteria</taxon>
        <taxon>Pseudomonadati</taxon>
        <taxon>Pseudomonadota</taxon>
        <taxon>Gammaproteobacteria</taxon>
        <taxon>Enterobacterales</taxon>
        <taxon>Yersiniaceae</taxon>
        <taxon>Yersinia</taxon>
    </lineage>
</organism>
<keyword id="KW-0067">ATP-binding</keyword>
<keyword id="KW-0997">Cell inner membrane</keyword>
<keyword id="KW-1003">Cell membrane</keyword>
<keyword id="KW-0472">Membrane</keyword>
<keyword id="KW-0547">Nucleotide-binding</keyword>
<keyword id="KW-0592">Phosphate transport</keyword>
<keyword id="KW-1185">Reference proteome</keyword>
<keyword id="KW-1278">Translocase</keyword>
<keyword id="KW-0813">Transport</keyword>
<proteinExistence type="inferred from homology"/>
<comment type="function">
    <text evidence="1">Part of the ABC transporter complex PstSACB involved in phosphate import. Responsible for energy coupling to the transport system.</text>
</comment>
<comment type="catalytic activity">
    <reaction evidence="1">
        <text>phosphate(out) + ATP + H2O = ADP + 2 phosphate(in) + H(+)</text>
        <dbReference type="Rhea" id="RHEA:24440"/>
        <dbReference type="ChEBI" id="CHEBI:15377"/>
        <dbReference type="ChEBI" id="CHEBI:15378"/>
        <dbReference type="ChEBI" id="CHEBI:30616"/>
        <dbReference type="ChEBI" id="CHEBI:43474"/>
        <dbReference type="ChEBI" id="CHEBI:456216"/>
        <dbReference type="EC" id="7.3.2.1"/>
    </reaction>
</comment>
<comment type="subunit">
    <text evidence="1">The complex is composed of two ATP-binding proteins (PstB), two transmembrane proteins (PstC and PstA) and a solute-binding protein (PstS).</text>
</comment>
<comment type="subcellular location">
    <subcellularLocation>
        <location evidence="1">Cell inner membrane</location>
        <topology evidence="1">Peripheral membrane protein</topology>
    </subcellularLocation>
</comment>
<comment type="similarity">
    <text evidence="1">Belongs to the ABC transporter superfamily. Phosphate importer (TC 3.A.1.7) family.</text>
</comment>
<comment type="sequence caution" evidence="2">
    <conflict type="erroneous initiation">
        <sequence resource="EMBL-CDS" id="AAM87670"/>
    </conflict>
</comment>
<comment type="sequence caution" evidence="2">
    <conflict type="erroneous initiation">
        <sequence resource="EMBL-CDS" id="AAS64160"/>
    </conflict>
</comment>
<dbReference type="EC" id="7.3.2.1" evidence="1"/>
<dbReference type="EMBL" id="AL590842">
    <property type="protein sequence ID" value="CAL22682.1"/>
    <property type="molecule type" value="Genomic_DNA"/>
</dbReference>
<dbReference type="EMBL" id="AE009952">
    <property type="protein sequence ID" value="AAM87670.1"/>
    <property type="status" value="ALT_INIT"/>
    <property type="molecule type" value="Genomic_DNA"/>
</dbReference>
<dbReference type="EMBL" id="AE017042">
    <property type="protein sequence ID" value="AAS64160.1"/>
    <property type="status" value="ALT_INIT"/>
    <property type="molecule type" value="Genomic_DNA"/>
</dbReference>
<dbReference type="PIR" id="AF0499">
    <property type="entry name" value="AF0499"/>
</dbReference>
<dbReference type="RefSeq" id="YP_002348965.1">
    <property type="nucleotide sequence ID" value="NC_003143.1"/>
</dbReference>
<dbReference type="SMR" id="Q8Z9T1"/>
<dbReference type="STRING" id="214092.YPO4114"/>
<dbReference type="PaxDb" id="214092-YPO4114"/>
<dbReference type="DNASU" id="1149075"/>
<dbReference type="EnsemblBacteria" id="AAS64160">
    <property type="protein sequence ID" value="AAS64160"/>
    <property type="gene ID" value="YP_4021"/>
</dbReference>
<dbReference type="KEGG" id="ype:YPO4114"/>
<dbReference type="KEGG" id="ypk:y4128"/>
<dbReference type="KEGG" id="ypm:YP_4021"/>
<dbReference type="PATRIC" id="fig|214092.21.peg.4657"/>
<dbReference type="eggNOG" id="COG1117">
    <property type="taxonomic scope" value="Bacteria"/>
</dbReference>
<dbReference type="HOGENOM" id="CLU_000604_1_22_6"/>
<dbReference type="OMA" id="TMSIYEN"/>
<dbReference type="OrthoDB" id="9802264at2"/>
<dbReference type="Proteomes" id="UP000000815">
    <property type="component" value="Chromosome"/>
</dbReference>
<dbReference type="Proteomes" id="UP000001019">
    <property type="component" value="Chromosome"/>
</dbReference>
<dbReference type="Proteomes" id="UP000002490">
    <property type="component" value="Chromosome"/>
</dbReference>
<dbReference type="GO" id="GO:0005886">
    <property type="term" value="C:plasma membrane"/>
    <property type="evidence" value="ECO:0007669"/>
    <property type="project" value="UniProtKB-SubCell"/>
</dbReference>
<dbReference type="GO" id="GO:0005524">
    <property type="term" value="F:ATP binding"/>
    <property type="evidence" value="ECO:0007669"/>
    <property type="project" value="UniProtKB-KW"/>
</dbReference>
<dbReference type="GO" id="GO:0016887">
    <property type="term" value="F:ATP hydrolysis activity"/>
    <property type="evidence" value="ECO:0007669"/>
    <property type="project" value="InterPro"/>
</dbReference>
<dbReference type="GO" id="GO:0015415">
    <property type="term" value="F:ATPase-coupled phosphate ion transmembrane transporter activity"/>
    <property type="evidence" value="ECO:0007669"/>
    <property type="project" value="UniProtKB-EC"/>
</dbReference>
<dbReference type="GO" id="GO:0035435">
    <property type="term" value="P:phosphate ion transmembrane transport"/>
    <property type="evidence" value="ECO:0007669"/>
    <property type="project" value="InterPro"/>
</dbReference>
<dbReference type="CDD" id="cd03260">
    <property type="entry name" value="ABC_PstB_phosphate_transporter"/>
    <property type="match status" value="1"/>
</dbReference>
<dbReference type="FunFam" id="3.40.50.300:FF:000132">
    <property type="entry name" value="Phosphate import ATP-binding protein PstB"/>
    <property type="match status" value="1"/>
</dbReference>
<dbReference type="Gene3D" id="3.40.50.300">
    <property type="entry name" value="P-loop containing nucleotide triphosphate hydrolases"/>
    <property type="match status" value="1"/>
</dbReference>
<dbReference type="InterPro" id="IPR003593">
    <property type="entry name" value="AAA+_ATPase"/>
</dbReference>
<dbReference type="InterPro" id="IPR003439">
    <property type="entry name" value="ABC_transporter-like_ATP-bd"/>
</dbReference>
<dbReference type="InterPro" id="IPR017871">
    <property type="entry name" value="ABC_transporter-like_CS"/>
</dbReference>
<dbReference type="InterPro" id="IPR027417">
    <property type="entry name" value="P-loop_NTPase"/>
</dbReference>
<dbReference type="InterPro" id="IPR005670">
    <property type="entry name" value="PstB-like"/>
</dbReference>
<dbReference type="NCBIfam" id="TIGR00972">
    <property type="entry name" value="3a0107s01c2"/>
    <property type="match status" value="1"/>
</dbReference>
<dbReference type="PANTHER" id="PTHR43423">
    <property type="entry name" value="ABC TRANSPORTER I FAMILY MEMBER 17"/>
    <property type="match status" value="1"/>
</dbReference>
<dbReference type="PANTHER" id="PTHR43423:SF3">
    <property type="entry name" value="PHOSPHATE IMPORT ATP-BINDING PROTEIN PSTB"/>
    <property type="match status" value="1"/>
</dbReference>
<dbReference type="Pfam" id="PF00005">
    <property type="entry name" value="ABC_tran"/>
    <property type="match status" value="1"/>
</dbReference>
<dbReference type="SMART" id="SM00382">
    <property type="entry name" value="AAA"/>
    <property type="match status" value="1"/>
</dbReference>
<dbReference type="SUPFAM" id="SSF52540">
    <property type="entry name" value="P-loop containing nucleoside triphosphate hydrolases"/>
    <property type="match status" value="1"/>
</dbReference>
<dbReference type="PROSITE" id="PS00211">
    <property type="entry name" value="ABC_TRANSPORTER_1"/>
    <property type="match status" value="1"/>
</dbReference>
<dbReference type="PROSITE" id="PS50893">
    <property type="entry name" value="ABC_TRANSPORTER_2"/>
    <property type="match status" value="1"/>
</dbReference>
<dbReference type="PROSITE" id="PS51238">
    <property type="entry name" value="PSTB"/>
    <property type="match status" value="1"/>
</dbReference>
<feature type="chain" id="PRO_0000092938" description="Phosphate import ATP-binding protein PstB 2">
    <location>
        <begin position="1"/>
        <end position="258"/>
    </location>
</feature>
<feature type="domain" description="ABC transporter" evidence="1">
    <location>
        <begin position="12"/>
        <end position="253"/>
    </location>
</feature>
<feature type="binding site" evidence="1">
    <location>
        <begin position="44"/>
        <end position="51"/>
    </location>
    <ligand>
        <name>ATP</name>
        <dbReference type="ChEBI" id="CHEBI:30616"/>
    </ligand>
</feature>
<gene>
    <name evidence="1" type="primary">pstB2</name>
    <name type="ordered locus">YPO4114</name>
    <name type="ordered locus">y4128</name>
    <name type="ordered locus">YP_4021</name>
</gene>
<sequence>MSMATDVTNSKIQVRDLNFYYGKFHALKNISLDIAKNQVTAFIGPSGCGKSTLLRTFNKMYQLYPEQRAEGDILLDGQNILTDKQDIALLRAKVGMVFQKPTPFPMSIYDNIAFGVKLFESLSRADMDERVQWALTKAALWNETKDKLHQSGYSLSGGQQQRLCIARGIAIRPDVLLLDEPCSALDPISTGRIEELISELKSDYTVVIVTHNMQQAARCSDHTAFMYLGELIEFSDTDTLFTTPQQKQTEDYITGRYG</sequence>
<evidence type="ECO:0000255" key="1">
    <source>
        <dbReference type="HAMAP-Rule" id="MF_01702"/>
    </source>
</evidence>
<evidence type="ECO:0000305" key="2"/>
<name>PSTB2_YERPE</name>
<protein>
    <recommendedName>
        <fullName evidence="1">Phosphate import ATP-binding protein PstB 2</fullName>
        <ecNumber evidence="1">7.3.2.1</ecNumber>
    </recommendedName>
    <alternativeName>
        <fullName evidence="1">ABC phosphate transporter 2</fullName>
    </alternativeName>
    <alternativeName>
        <fullName evidence="1">Phosphate-transporting ATPase 2</fullName>
    </alternativeName>
</protein>